<organism>
    <name type="scientific">Oryza sativa subsp. japonica</name>
    <name type="common">Rice</name>
    <dbReference type="NCBI Taxonomy" id="39947"/>
    <lineage>
        <taxon>Eukaryota</taxon>
        <taxon>Viridiplantae</taxon>
        <taxon>Streptophyta</taxon>
        <taxon>Embryophyta</taxon>
        <taxon>Tracheophyta</taxon>
        <taxon>Spermatophyta</taxon>
        <taxon>Magnoliopsida</taxon>
        <taxon>Liliopsida</taxon>
        <taxon>Poales</taxon>
        <taxon>Poaceae</taxon>
        <taxon>BOP clade</taxon>
        <taxon>Oryzoideae</taxon>
        <taxon>Oryzeae</taxon>
        <taxon>Oryzinae</taxon>
        <taxon>Oryza</taxon>
        <taxon>Oryza sativa</taxon>
    </lineage>
</organism>
<gene>
    <name type="primary">PAG1</name>
    <name type="ordered locus">Os01g0811100</name>
    <name type="ordered locus">LOC_Os01g59600</name>
    <name evidence="3" type="ORF">OsJ_03826</name>
    <name type="ORF">P0425G02.8</name>
    <name type="ORF">P0468B07.45</name>
</gene>
<dbReference type="EMBL" id="AB026562">
    <property type="protein sequence ID" value="BAA96833.1"/>
    <property type="molecule type" value="mRNA"/>
</dbReference>
<dbReference type="EMBL" id="AP003247">
    <property type="protein sequence ID" value="BAD68202.1"/>
    <property type="molecule type" value="Genomic_DNA"/>
</dbReference>
<dbReference type="EMBL" id="AP003260">
    <property type="protein sequence ID" value="BAD68244.1"/>
    <property type="molecule type" value="Genomic_DNA"/>
</dbReference>
<dbReference type="EMBL" id="AP008207">
    <property type="protein sequence ID" value="BAF06502.1"/>
    <property type="molecule type" value="Genomic_DNA"/>
</dbReference>
<dbReference type="EMBL" id="AP014957">
    <property type="protein sequence ID" value="BAS74874.1"/>
    <property type="molecule type" value="Genomic_DNA"/>
</dbReference>
<dbReference type="EMBL" id="CM000138">
    <property type="protein sequence ID" value="EEE55561.1"/>
    <property type="molecule type" value="Genomic_DNA"/>
</dbReference>
<dbReference type="EMBL" id="AK103541">
    <property type="protein sequence ID" value="BAG96137.1"/>
    <property type="molecule type" value="mRNA"/>
</dbReference>
<dbReference type="RefSeq" id="XP_015644254.1">
    <property type="nucleotide sequence ID" value="XM_015788768.1"/>
</dbReference>
<dbReference type="SMR" id="Q9LSU0"/>
<dbReference type="FunCoup" id="Q9LSU0">
    <property type="interactions" value="3603"/>
</dbReference>
<dbReference type="STRING" id="39947.Q9LSU0"/>
<dbReference type="PaxDb" id="39947-Q9LSU0"/>
<dbReference type="EnsemblPlants" id="Os01t0811100-01">
    <property type="protein sequence ID" value="Os01t0811100-01"/>
    <property type="gene ID" value="Os01g0811100"/>
</dbReference>
<dbReference type="EnsemblPlants" id="Os01t0811100-02">
    <property type="protein sequence ID" value="Os01t0811100-02"/>
    <property type="gene ID" value="Os01g0811100"/>
</dbReference>
<dbReference type="Gramene" id="Os01t0811100-01">
    <property type="protein sequence ID" value="Os01t0811100-01"/>
    <property type="gene ID" value="Os01g0811100"/>
</dbReference>
<dbReference type="Gramene" id="Os01t0811100-02">
    <property type="protein sequence ID" value="Os01t0811100-02"/>
    <property type="gene ID" value="Os01g0811100"/>
</dbReference>
<dbReference type="KEGG" id="dosa:Os01g0811100"/>
<dbReference type="eggNOG" id="KOG0184">
    <property type="taxonomic scope" value="Eukaryota"/>
</dbReference>
<dbReference type="HOGENOM" id="CLU_035750_0_0_1"/>
<dbReference type="InParanoid" id="Q9LSU0"/>
<dbReference type="OMA" id="RVSMYMH"/>
<dbReference type="OrthoDB" id="431557at2759"/>
<dbReference type="Proteomes" id="UP000000763">
    <property type="component" value="Chromosome 1"/>
</dbReference>
<dbReference type="Proteomes" id="UP000007752">
    <property type="component" value="Chromosome 1"/>
</dbReference>
<dbReference type="Proteomes" id="UP000059680">
    <property type="component" value="Chromosome 1"/>
</dbReference>
<dbReference type="GO" id="GO:0005737">
    <property type="term" value="C:cytoplasm"/>
    <property type="evidence" value="ECO:0007669"/>
    <property type="project" value="UniProtKB-SubCell"/>
</dbReference>
<dbReference type="GO" id="GO:0005634">
    <property type="term" value="C:nucleus"/>
    <property type="evidence" value="ECO:0000318"/>
    <property type="project" value="GO_Central"/>
</dbReference>
<dbReference type="GO" id="GO:0019773">
    <property type="term" value="C:proteasome core complex, alpha-subunit complex"/>
    <property type="evidence" value="ECO:0000250"/>
    <property type="project" value="UniProtKB"/>
</dbReference>
<dbReference type="GO" id="GO:0043161">
    <property type="term" value="P:proteasome-mediated ubiquitin-dependent protein catabolic process"/>
    <property type="evidence" value="ECO:0000318"/>
    <property type="project" value="GO_Central"/>
</dbReference>
<dbReference type="CDD" id="cd03751">
    <property type="entry name" value="proteasome_alpha_type_3"/>
    <property type="match status" value="1"/>
</dbReference>
<dbReference type="FunFam" id="3.60.20.10:FF:000007">
    <property type="entry name" value="Proteasome subunit alpha type"/>
    <property type="match status" value="1"/>
</dbReference>
<dbReference type="Gene3D" id="3.60.20.10">
    <property type="entry name" value="Glutamine Phosphoribosylpyrophosphate, subunit 1, domain 1"/>
    <property type="match status" value="1"/>
</dbReference>
<dbReference type="InterPro" id="IPR029055">
    <property type="entry name" value="Ntn_hydrolases_N"/>
</dbReference>
<dbReference type="InterPro" id="IPR050115">
    <property type="entry name" value="Proteasome_alpha"/>
</dbReference>
<dbReference type="InterPro" id="IPR023332">
    <property type="entry name" value="Proteasome_alpha-type"/>
</dbReference>
<dbReference type="InterPro" id="IPR000426">
    <property type="entry name" value="Proteasome_asu_N"/>
</dbReference>
<dbReference type="InterPro" id="IPR001353">
    <property type="entry name" value="Proteasome_sua/b"/>
</dbReference>
<dbReference type="PANTHER" id="PTHR11599">
    <property type="entry name" value="PROTEASOME SUBUNIT ALPHA/BETA"/>
    <property type="match status" value="1"/>
</dbReference>
<dbReference type="Pfam" id="PF00227">
    <property type="entry name" value="Proteasome"/>
    <property type="match status" value="1"/>
</dbReference>
<dbReference type="Pfam" id="PF10584">
    <property type="entry name" value="Proteasome_A_N"/>
    <property type="match status" value="1"/>
</dbReference>
<dbReference type="SMART" id="SM00948">
    <property type="entry name" value="Proteasome_A_N"/>
    <property type="match status" value="1"/>
</dbReference>
<dbReference type="SUPFAM" id="SSF56235">
    <property type="entry name" value="N-terminal nucleophile aminohydrolases (Ntn hydrolases)"/>
    <property type="match status" value="1"/>
</dbReference>
<dbReference type="PROSITE" id="PS00388">
    <property type="entry name" value="PROTEASOME_ALPHA_1"/>
    <property type="match status" value="1"/>
</dbReference>
<dbReference type="PROSITE" id="PS51475">
    <property type="entry name" value="PROTEASOME_ALPHA_2"/>
    <property type="match status" value="1"/>
</dbReference>
<comment type="function">
    <text>The proteasome is a multicatalytic proteinase complex which is characterized by its ability to cleave peptides with Arg, Phe, Tyr, Leu, and Glu adjacent to the leaving group at neutral or slightly basic pH. The proteasome has an ATP-dependent proteolytic activity.</text>
</comment>
<comment type="subunit">
    <text evidence="1">The 26S proteasome consists of a 20S proteasome core and two 19S regulatory subunits. The 20S proteasome core is composed of 28 subunits that are arranged in four stacked rings, resulting in a barrel-shaped structure. The two end rings are each formed by seven alpha subunits, and the two central rings are each formed by seven beta subunits. The catalytic chamber with the active sites is on the inside of the barrel (By similarity).</text>
</comment>
<comment type="subcellular location">
    <subcellularLocation>
        <location evidence="1">Cytoplasm</location>
    </subcellularLocation>
    <subcellularLocation>
        <location evidence="1">Nucleus</location>
    </subcellularLocation>
</comment>
<comment type="similarity">
    <text evidence="2">Belongs to the peptidase T1A family.</text>
</comment>
<accession>Q9LSU0</accession>
<accession>Q0JIC6</accession>
<accession>Q5VQP2</accession>
<evidence type="ECO:0000250" key="1"/>
<evidence type="ECO:0000255" key="2">
    <source>
        <dbReference type="PROSITE-ProRule" id="PRU00808"/>
    </source>
</evidence>
<evidence type="ECO:0000312" key="3">
    <source>
        <dbReference type="EMBL" id="EEE55561.1"/>
    </source>
</evidence>
<feature type="chain" id="PRO_0000124099" description="Proteasome subunit alpha type-3">
    <location>
        <begin position="1"/>
        <end position="249"/>
    </location>
</feature>
<name>PSA3_ORYSJ</name>
<protein>
    <recommendedName>
        <fullName>Proteasome subunit alpha type-3</fullName>
    </recommendedName>
    <alternativeName>
        <fullName>20S proteasome alpha subunit G</fullName>
    </alternativeName>
    <alternativeName>
        <fullName>20S proteasome subunit alpha-7</fullName>
    </alternativeName>
</protein>
<sequence length="249" mass="27238">MSSIGTGYDLSVTTFSPDGRVFQVEYATKAVDNSGTVVGIKCKDGIVLGVEKLVTSKMMLEGSNRRIHSVHWHSGLAVAGLAADGRQIVSRAKSEAASYEKVYGEPISVKELADRVASYVHLCTLYWWLRPFGCGVILGGYDRDGPQLYMIEPSGVSYKYFGAALGKGRQAAKTEIEKLKLSELTCREGIVEVAKIIYGVHDEAKDKAFELELSWICDESNRQHQKVPADLLEQAKVAAQAALEEMDAD</sequence>
<keyword id="KW-0963">Cytoplasm</keyword>
<keyword id="KW-0539">Nucleus</keyword>
<keyword id="KW-0647">Proteasome</keyword>
<keyword id="KW-1185">Reference proteome</keyword>
<reference key="1">
    <citation type="journal article" date="2000" name="Gene">
        <title>Primary structural features of the 20S proteasome subunits of rice (Oryza sativa).</title>
        <authorList>
            <person name="Sassa H."/>
            <person name="Oguchi S."/>
            <person name="Inoue T."/>
            <person name="Hirano H."/>
        </authorList>
    </citation>
    <scope>NUCLEOTIDE SEQUENCE [MRNA]</scope>
    <source>
        <strain>cv. Nipponbare</strain>
    </source>
</reference>
<reference key="2">
    <citation type="journal article" date="2002" name="Nature">
        <title>The genome sequence and structure of rice chromosome 1.</title>
        <authorList>
            <person name="Sasaki T."/>
            <person name="Matsumoto T."/>
            <person name="Yamamoto K."/>
            <person name="Sakata K."/>
            <person name="Baba T."/>
            <person name="Katayose Y."/>
            <person name="Wu J."/>
            <person name="Niimura Y."/>
            <person name="Cheng Z."/>
            <person name="Nagamura Y."/>
            <person name="Antonio B.A."/>
            <person name="Kanamori H."/>
            <person name="Hosokawa S."/>
            <person name="Masukawa M."/>
            <person name="Arikawa K."/>
            <person name="Chiden Y."/>
            <person name="Hayashi M."/>
            <person name="Okamoto M."/>
            <person name="Ando T."/>
            <person name="Aoki H."/>
            <person name="Arita K."/>
            <person name="Hamada M."/>
            <person name="Harada C."/>
            <person name="Hijishita S."/>
            <person name="Honda M."/>
            <person name="Ichikawa Y."/>
            <person name="Idonuma A."/>
            <person name="Iijima M."/>
            <person name="Ikeda M."/>
            <person name="Ikeno M."/>
            <person name="Ito S."/>
            <person name="Ito T."/>
            <person name="Ito Y."/>
            <person name="Ito Y."/>
            <person name="Iwabuchi A."/>
            <person name="Kamiya K."/>
            <person name="Karasawa W."/>
            <person name="Katagiri S."/>
            <person name="Kikuta A."/>
            <person name="Kobayashi N."/>
            <person name="Kono I."/>
            <person name="Machita K."/>
            <person name="Maehara T."/>
            <person name="Mizuno H."/>
            <person name="Mizubayashi T."/>
            <person name="Mukai Y."/>
            <person name="Nagasaki H."/>
            <person name="Nakashima M."/>
            <person name="Nakama Y."/>
            <person name="Nakamichi Y."/>
            <person name="Nakamura M."/>
            <person name="Namiki N."/>
            <person name="Negishi M."/>
            <person name="Ohta I."/>
            <person name="Ono N."/>
            <person name="Saji S."/>
            <person name="Sakai K."/>
            <person name="Shibata M."/>
            <person name="Shimokawa T."/>
            <person name="Shomura A."/>
            <person name="Song J."/>
            <person name="Takazaki Y."/>
            <person name="Terasawa K."/>
            <person name="Tsuji K."/>
            <person name="Waki K."/>
            <person name="Yamagata H."/>
            <person name="Yamane H."/>
            <person name="Yoshiki S."/>
            <person name="Yoshihara R."/>
            <person name="Yukawa K."/>
            <person name="Zhong H."/>
            <person name="Iwama H."/>
            <person name="Endo T."/>
            <person name="Ito H."/>
            <person name="Hahn J.H."/>
            <person name="Kim H.-I."/>
            <person name="Eun M.-Y."/>
            <person name="Yano M."/>
            <person name="Jiang J."/>
            <person name="Gojobori T."/>
        </authorList>
    </citation>
    <scope>NUCLEOTIDE SEQUENCE [LARGE SCALE GENOMIC DNA]</scope>
    <source>
        <strain>cv. Nipponbare</strain>
    </source>
</reference>
<reference key="3">
    <citation type="journal article" date="2005" name="Nature">
        <title>The map-based sequence of the rice genome.</title>
        <authorList>
            <consortium name="International rice genome sequencing project (IRGSP)"/>
        </authorList>
    </citation>
    <scope>NUCLEOTIDE SEQUENCE [LARGE SCALE GENOMIC DNA]</scope>
    <source>
        <strain>cv. Nipponbare</strain>
    </source>
</reference>
<reference key="4">
    <citation type="journal article" date="2008" name="Nucleic Acids Res.">
        <title>The rice annotation project database (RAP-DB): 2008 update.</title>
        <authorList>
            <consortium name="The rice annotation project (RAP)"/>
        </authorList>
    </citation>
    <scope>GENOME REANNOTATION</scope>
    <source>
        <strain>cv. Nipponbare</strain>
    </source>
</reference>
<reference key="5">
    <citation type="journal article" date="2013" name="Rice">
        <title>Improvement of the Oryza sativa Nipponbare reference genome using next generation sequence and optical map data.</title>
        <authorList>
            <person name="Kawahara Y."/>
            <person name="de la Bastide M."/>
            <person name="Hamilton J.P."/>
            <person name="Kanamori H."/>
            <person name="McCombie W.R."/>
            <person name="Ouyang S."/>
            <person name="Schwartz D.C."/>
            <person name="Tanaka T."/>
            <person name="Wu J."/>
            <person name="Zhou S."/>
            <person name="Childs K.L."/>
            <person name="Davidson R.M."/>
            <person name="Lin H."/>
            <person name="Quesada-Ocampo L."/>
            <person name="Vaillancourt B."/>
            <person name="Sakai H."/>
            <person name="Lee S.S."/>
            <person name="Kim J."/>
            <person name="Numa H."/>
            <person name="Itoh T."/>
            <person name="Buell C.R."/>
            <person name="Matsumoto T."/>
        </authorList>
    </citation>
    <scope>GENOME REANNOTATION</scope>
    <source>
        <strain>cv. Nipponbare</strain>
    </source>
</reference>
<reference key="6">
    <citation type="journal article" date="2005" name="PLoS Biol.">
        <title>The genomes of Oryza sativa: a history of duplications.</title>
        <authorList>
            <person name="Yu J."/>
            <person name="Wang J."/>
            <person name="Lin W."/>
            <person name="Li S."/>
            <person name="Li H."/>
            <person name="Zhou J."/>
            <person name="Ni P."/>
            <person name="Dong W."/>
            <person name="Hu S."/>
            <person name="Zeng C."/>
            <person name="Zhang J."/>
            <person name="Zhang Y."/>
            <person name="Li R."/>
            <person name="Xu Z."/>
            <person name="Li S."/>
            <person name="Li X."/>
            <person name="Zheng H."/>
            <person name="Cong L."/>
            <person name="Lin L."/>
            <person name="Yin J."/>
            <person name="Geng J."/>
            <person name="Li G."/>
            <person name="Shi J."/>
            <person name="Liu J."/>
            <person name="Lv H."/>
            <person name="Li J."/>
            <person name="Wang J."/>
            <person name="Deng Y."/>
            <person name="Ran L."/>
            <person name="Shi X."/>
            <person name="Wang X."/>
            <person name="Wu Q."/>
            <person name="Li C."/>
            <person name="Ren X."/>
            <person name="Wang J."/>
            <person name="Wang X."/>
            <person name="Li D."/>
            <person name="Liu D."/>
            <person name="Zhang X."/>
            <person name="Ji Z."/>
            <person name="Zhao W."/>
            <person name="Sun Y."/>
            <person name="Zhang Z."/>
            <person name="Bao J."/>
            <person name="Han Y."/>
            <person name="Dong L."/>
            <person name="Ji J."/>
            <person name="Chen P."/>
            <person name="Wu S."/>
            <person name="Liu J."/>
            <person name="Xiao Y."/>
            <person name="Bu D."/>
            <person name="Tan J."/>
            <person name="Yang L."/>
            <person name="Ye C."/>
            <person name="Zhang J."/>
            <person name="Xu J."/>
            <person name="Zhou Y."/>
            <person name="Yu Y."/>
            <person name="Zhang B."/>
            <person name="Zhuang S."/>
            <person name="Wei H."/>
            <person name="Liu B."/>
            <person name="Lei M."/>
            <person name="Yu H."/>
            <person name="Li Y."/>
            <person name="Xu H."/>
            <person name="Wei S."/>
            <person name="He X."/>
            <person name="Fang L."/>
            <person name="Zhang Z."/>
            <person name="Zhang Y."/>
            <person name="Huang X."/>
            <person name="Su Z."/>
            <person name="Tong W."/>
            <person name="Li J."/>
            <person name="Tong Z."/>
            <person name="Li S."/>
            <person name="Ye J."/>
            <person name="Wang L."/>
            <person name="Fang L."/>
            <person name="Lei T."/>
            <person name="Chen C.-S."/>
            <person name="Chen H.-C."/>
            <person name="Xu Z."/>
            <person name="Li H."/>
            <person name="Huang H."/>
            <person name="Zhang F."/>
            <person name="Xu H."/>
            <person name="Li N."/>
            <person name="Zhao C."/>
            <person name="Li S."/>
            <person name="Dong L."/>
            <person name="Huang Y."/>
            <person name="Li L."/>
            <person name="Xi Y."/>
            <person name="Qi Q."/>
            <person name="Li W."/>
            <person name="Zhang B."/>
            <person name="Hu W."/>
            <person name="Zhang Y."/>
            <person name="Tian X."/>
            <person name="Jiao Y."/>
            <person name="Liang X."/>
            <person name="Jin J."/>
            <person name="Gao L."/>
            <person name="Zheng W."/>
            <person name="Hao B."/>
            <person name="Liu S.-M."/>
            <person name="Wang W."/>
            <person name="Yuan L."/>
            <person name="Cao M."/>
            <person name="McDermott J."/>
            <person name="Samudrala R."/>
            <person name="Wang J."/>
            <person name="Wong G.K.-S."/>
            <person name="Yang H."/>
        </authorList>
    </citation>
    <scope>NUCLEOTIDE SEQUENCE [LARGE SCALE GENOMIC DNA]</scope>
    <source>
        <strain>cv. Nipponbare</strain>
    </source>
</reference>
<reference key="7">
    <citation type="journal article" date="2003" name="Science">
        <title>Collection, mapping, and annotation of over 28,000 cDNA clones from japonica rice.</title>
        <authorList>
            <consortium name="The rice full-length cDNA consortium"/>
        </authorList>
    </citation>
    <scope>NUCLEOTIDE SEQUENCE [LARGE SCALE MRNA]</scope>
    <source>
        <strain>cv. Nipponbare</strain>
    </source>
</reference>
<proteinExistence type="evidence at transcript level"/>